<proteinExistence type="evidence at transcript level"/>
<sequence>MAAVSVFPGVRLLSIGDANGEIQRHAEQRELRLEARAGDIALYNAENVCVFKCTITRDTECSRVGKQSFIVTLGCNSVLVQFATPADFCSFYNIIKSCRCPATERSVFSERTEESSAVQYFQFYGYLSQQQNMMQDYVRTGTYQRAILQNHTDFKDKVVLDVGCGSGILSFFAVQAGARKVYAVEASSMAQHAELLVKSNNLTDRVVVIPGKVEEISLPEQVDMIISEPMGYMLFNERMLESYLHAKKFLKPNGNMFPTIGDVHLAPFTDEQLYMEQFTKANFWYQPSFHGVDLSALRGAAVDEYFKQPIVDTFDIRILMAKSVKYTVNFLDAKETDLHRIEIPFSFHMLHSGLVHGLAFWFDVAFIGSIMTVWLSTAPTEPLTHWYQVRCLLQSPIFTKAGDTLSGTVLLIANKKQSYDISIVAQVDQTGSKSSNLLDLKNPFFRYTGSAPSPPPGSHYSSPSENMWNTGGAYTMNTGMGMGGMPTAYDLSSVIGGSSGISHSNLIPLGEPPAVSCPPAPLHSEPQDLTLGTSTNTGIVNHTHSRMGSIMSTGIVQGSAGGQAASNSSSHYPVNNQFTMGGPAISMASPMSITTNTMHYGS</sequence>
<keyword id="KW-0156">Chromatin regulator</keyword>
<keyword id="KW-0158">Chromosome</keyword>
<keyword id="KW-0963">Cytoplasm</keyword>
<keyword id="KW-0489">Methyltransferase</keyword>
<keyword id="KW-0539">Nucleus</keyword>
<keyword id="KW-1185">Reference proteome</keyword>
<keyword id="KW-0949">S-adenosyl-L-methionine</keyword>
<keyword id="KW-0804">Transcription</keyword>
<keyword id="KW-0805">Transcription regulation</keyword>
<keyword id="KW-0808">Transferase</keyword>
<protein>
    <recommendedName>
        <fullName>Histone-arginine methyltransferase CARM1</fullName>
        <ecNumber evidence="2">2.1.1.319</ecNumber>
    </recommendedName>
    <alternativeName>
        <fullName>Coactivator-associated arginine methyltransferase 1</fullName>
    </alternativeName>
    <alternativeName>
        <fullName>Protein arginine N-methyltransferase 4</fullName>
    </alternativeName>
</protein>
<gene>
    <name type="primary">carm1</name>
</gene>
<organism>
    <name type="scientific">Xenopus laevis</name>
    <name type="common">African clawed frog</name>
    <dbReference type="NCBI Taxonomy" id="8355"/>
    <lineage>
        <taxon>Eukaryota</taxon>
        <taxon>Metazoa</taxon>
        <taxon>Chordata</taxon>
        <taxon>Craniata</taxon>
        <taxon>Vertebrata</taxon>
        <taxon>Euteleostomi</taxon>
        <taxon>Amphibia</taxon>
        <taxon>Batrachia</taxon>
        <taxon>Anura</taxon>
        <taxon>Pipoidea</taxon>
        <taxon>Pipidae</taxon>
        <taxon>Xenopodinae</taxon>
        <taxon>Xenopus</taxon>
        <taxon>Xenopus</taxon>
    </lineage>
</organism>
<accession>Q5XK84</accession>
<evidence type="ECO:0000250" key="1">
    <source>
        <dbReference type="UniProtKB" id="Q86X55"/>
    </source>
</evidence>
<evidence type="ECO:0000250" key="2">
    <source>
        <dbReference type="UniProtKB" id="Q9WVG6"/>
    </source>
</evidence>
<evidence type="ECO:0000255" key="3">
    <source>
        <dbReference type="PROSITE-ProRule" id="PRU01015"/>
    </source>
</evidence>
<feature type="chain" id="PRO_0000249252" description="Histone-arginine methyltransferase CARM1">
    <location>
        <begin position="1"/>
        <end position="602"/>
    </location>
</feature>
<feature type="domain" description="SAM-dependent MTase PRMT-type" evidence="3">
    <location>
        <begin position="117"/>
        <end position="424"/>
    </location>
</feature>
<feature type="region of interest" description="Transactivation domain" evidence="2">
    <location>
        <begin position="470"/>
        <end position="602"/>
    </location>
</feature>
<feature type="binding site" evidence="2">
    <location>
        <position position="130"/>
    </location>
    <ligand>
        <name>S-adenosyl-L-methionine</name>
        <dbReference type="ChEBI" id="CHEBI:59789"/>
    </ligand>
</feature>
<feature type="binding site" evidence="2">
    <location>
        <position position="139"/>
    </location>
    <ligand>
        <name>S-adenosyl-L-methionine</name>
        <dbReference type="ChEBI" id="CHEBI:59789"/>
    </ligand>
</feature>
<feature type="binding site" evidence="2">
    <location>
        <position position="163"/>
    </location>
    <ligand>
        <name>S-adenosyl-L-methionine</name>
        <dbReference type="ChEBI" id="CHEBI:59789"/>
    </ligand>
</feature>
<feature type="binding site" evidence="2">
    <location>
        <position position="185"/>
    </location>
    <ligand>
        <name>S-adenosyl-L-methionine</name>
        <dbReference type="ChEBI" id="CHEBI:59789"/>
    </ligand>
</feature>
<feature type="binding site" evidence="2">
    <location>
        <position position="214"/>
    </location>
    <ligand>
        <name>S-adenosyl-L-methionine</name>
        <dbReference type="ChEBI" id="CHEBI:59789"/>
    </ligand>
</feature>
<feature type="binding site" evidence="2">
    <location>
        <position position="242"/>
    </location>
    <ligand>
        <name>S-adenosyl-L-methionine</name>
        <dbReference type="ChEBI" id="CHEBI:59789"/>
    </ligand>
</feature>
<dbReference type="EC" id="2.1.1.319" evidence="2"/>
<dbReference type="EMBL" id="BC083030">
    <property type="protein sequence ID" value="AAH83030.1"/>
    <property type="molecule type" value="mRNA"/>
</dbReference>
<dbReference type="RefSeq" id="NP_001088145.1">
    <property type="nucleotide sequence ID" value="NM_001094676.1"/>
</dbReference>
<dbReference type="SMR" id="Q5XK84"/>
<dbReference type="GeneID" id="494851"/>
<dbReference type="KEGG" id="xla:494851"/>
<dbReference type="AGR" id="Xenbase:XB-GENE-865101"/>
<dbReference type="CTD" id="494851"/>
<dbReference type="Xenbase" id="XB-GENE-865101">
    <property type="gene designation" value="carm1.S"/>
</dbReference>
<dbReference type="OrthoDB" id="7848332at2759"/>
<dbReference type="Proteomes" id="UP000186698">
    <property type="component" value="Chromosome 3S"/>
</dbReference>
<dbReference type="Bgee" id="494851">
    <property type="expression patterns" value="Expressed in gastrula and 19 other cell types or tissues"/>
</dbReference>
<dbReference type="GO" id="GO:0005829">
    <property type="term" value="C:cytosol"/>
    <property type="evidence" value="ECO:0000250"/>
    <property type="project" value="UniProtKB"/>
</dbReference>
<dbReference type="GO" id="GO:0043596">
    <property type="term" value="C:nuclear replication fork"/>
    <property type="evidence" value="ECO:0000250"/>
    <property type="project" value="UniProtKB"/>
</dbReference>
<dbReference type="GO" id="GO:0005634">
    <property type="term" value="C:nucleus"/>
    <property type="evidence" value="ECO:0000250"/>
    <property type="project" value="UniProtKB"/>
</dbReference>
<dbReference type="GO" id="GO:0035642">
    <property type="term" value="F:histone H3R17 methyltransferase activity"/>
    <property type="evidence" value="ECO:0000250"/>
    <property type="project" value="UniProtKB"/>
</dbReference>
<dbReference type="GO" id="GO:0070611">
    <property type="term" value="F:histone H3R2 methyltransferase activity"/>
    <property type="evidence" value="ECO:0000250"/>
    <property type="project" value="UniProtKB"/>
</dbReference>
<dbReference type="GO" id="GO:0140903">
    <property type="term" value="F:histone H3R26 methyltransferase activity"/>
    <property type="evidence" value="ECO:0000250"/>
    <property type="project" value="UniProtKB"/>
</dbReference>
<dbReference type="GO" id="GO:0042054">
    <property type="term" value="F:histone methyltransferase activity"/>
    <property type="evidence" value="ECO:0000250"/>
    <property type="project" value="UniProtKB"/>
</dbReference>
<dbReference type="GO" id="GO:0016274">
    <property type="term" value="F:protein-arginine N-methyltransferase activity"/>
    <property type="evidence" value="ECO:0000250"/>
    <property type="project" value="UniProtKB"/>
</dbReference>
<dbReference type="GO" id="GO:0035242">
    <property type="term" value="F:protein-arginine omega-N asymmetric methyltransferase activity"/>
    <property type="evidence" value="ECO:0000250"/>
    <property type="project" value="UniProtKB"/>
</dbReference>
<dbReference type="GO" id="GO:0000976">
    <property type="term" value="F:transcription cis-regulatory region binding"/>
    <property type="evidence" value="ECO:0000250"/>
    <property type="project" value="UniProtKB"/>
</dbReference>
<dbReference type="GO" id="GO:0003713">
    <property type="term" value="F:transcription coactivator activity"/>
    <property type="evidence" value="ECO:0000250"/>
    <property type="project" value="UniProtKB"/>
</dbReference>
<dbReference type="GO" id="GO:0006338">
    <property type="term" value="P:chromatin remodeling"/>
    <property type="evidence" value="ECO:0000318"/>
    <property type="project" value="GO_Central"/>
</dbReference>
<dbReference type="GO" id="GO:0032259">
    <property type="term" value="P:methylation"/>
    <property type="evidence" value="ECO:0007669"/>
    <property type="project" value="UniProtKB-KW"/>
</dbReference>
<dbReference type="GO" id="GO:0006355">
    <property type="term" value="P:regulation of DNA-templated transcription"/>
    <property type="evidence" value="ECO:0000318"/>
    <property type="project" value="GO_Central"/>
</dbReference>
<dbReference type="GO" id="GO:0033146">
    <property type="term" value="P:regulation of intracellular estrogen receptor signaling pathway"/>
    <property type="evidence" value="ECO:0000250"/>
    <property type="project" value="UniProtKB"/>
</dbReference>
<dbReference type="GO" id="GO:0071932">
    <property type="term" value="P:replication fork reversal"/>
    <property type="evidence" value="ECO:0000250"/>
    <property type="project" value="UniProtKB"/>
</dbReference>
<dbReference type="CDD" id="cd02440">
    <property type="entry name" value="AdoMet_MTases"/>
    <property type="match status" value="1"/>
</dbReference>
<dbReference type="CDD" id="cd13330">
    <property type="entry name" value="PH_CARM1"/>
    <property type="match status" value="1"/>
</dbReference>
<dbReference type="FunFam" id="2.70.160.11:FF:000002">
    <property type="entry name" value="Probable histone-arginine methyltransferase CARM1"/>
    <property type="match status" value="1"/>
</dbReference>
<dbReference type="FunFam" id="3.40.50.150:FF:000031">
    <property type="entry name" value="Putative Histone-arginine methyltransferase CARM1"/>
    <property type="match status" value="1"/>
</dbReference>
<dbReference type="Gene3D" id="2.70.160.11">
    <property type="entry name" value="Hnrnp arginine n-methyltransferase1"/>
    <property type="match status" value="1"/>
</dbReference>
<dbReference type="Gene3D" id="2.30.29.30">
    <property type="entry name" value="Pleckstrin-homology domain (PH domain)/Phosphotyrosine-binding domain (PTB)"/>
    <property type="match status" value="1"/>
</dbReference>
<dbReference type="Gene3D" id="3.40.50.150">
    <property type="entry name" value="Vaccinia Virus protein VP39"/>
    <property type="match status" value="1"/>
</dbReference>
<dbReference type="InterPro" id="IPR025799">
    <property type="entry name" value="Arg_MeTrfase"/>
</dbReference>
<dbReference type="InterPro" id="IPR020989">
    <property type="entry name" value="Histone-Arg_MeTrfase_N"/>
</dbReference>
<dbReference type="InterPro" id="IPR011993">
    <property type="entry name" value="PH-like_dom_sf"/>
</dbReference>
<dbReference type="InterPro" id="IPR055135">
    <property type="entry name" value="PRMT_dom"/>
</dbReference>
<dbReference type="InterPro" id="IPR029063">
    <property type="entry name" value="SAM-dependent_MTases_sf"/>
</dbReference>
<dbReference type="PANTHER" id="PTHR11006:SF51">
    <property type="entry name" value="HISTONE-ARGININE METHYLTRANSFERASE CARM1"/>
    <property type="match status" value="1"/>
</dbReference>
<dbReference type="PANTHER" id="PTHR11006">
    <property type="entry name" value="PROTEIN ARGININE N-METHYLTRANSFERASE"/>
    <property type="match status" value="1"/>
</dbReference>
<dbReference type="Pfam" id="PF11531">
    <property type="entry name" value="CARM1"/>
    <property type="match status" value="1"/>
</dbReference>
<dbReference type="Pfam" id="PF06325">
    <property type="entry name" value="PrmA"/>
    <property type="match status" value="1"/>
</dbReference>
<dbReference type="Pfam" id="PF22528">
    <property type="entry name" value="PRMT_C"/>
    <property type="match status" value="1"/>
</dbReference>
<dbReference type="SUPFAM" id="SSF53335">
    <property type="entry name" value="S-adenosyl-L-methionine-dependent methyltransferases"/>
    <property type="match status" value="1"/>
</dbReference>
<dbReference type="PROSITE" id="PS51678">
    <property type="entry name" value="SAM_MT_PRMT"/>
    <property type="match status" value="1"/>
</dbReference>
<comment type="function">
    <text evidence="1 2">Methylates (mono- and asymmetric dimethylation) the guanidino nitrogens of arginyl residues in several proteins involved in DNA packaging, transcription regulation, pre-mRNA splicing, and mRNA stability. Recruited to promoters upon gene activation together with histone acetyltransferases from EP300/P300 and p160 families, methylates histone H3 at 'Arg-17' (H3R17me) and activates transcription via chromatin remodeling.</text>
</comment>
<comment type="catalytic activity">
    <reaction evidence="2">
        <text>L-arginyl-[protein] + 2 S-adenosyl-L-methionine = N(omega),N(omega)-dimethyl-L-arginyl-[protein] + 2 S-adenosyl-L-homocysteine + 2 H(+)</text>
        <dbReference type="Rhea" id="RHEA:48096"/>
        <dbReference type="Rhea" id="RHEA-COMP:10532"/>
        <dbReference type="Rhea" id="RHEA-COMP:11991"/>
        <dbReference type="ChEBI" id="CHEBI:15378"/>
        <dbReference type="ChEBI" id="CHEBI:29965"/>
        <dbReference type="ChEBI" id="CHEBI:57856"/>
        <dbReference type="ChEBI" id="CHEBI:59789"/>
        <dbReference type="ChEBI" id="CHEBI:61897"/>
        <dbReference type="EC" id="2.1.1.319"/>
    </reaction>
</comment>
<comment type="subunit">
    <text evidence="2">Homodimer.</text>
</comment>
<comment type="subcellular location">
    <subcellularLocation>
        <location evidence="1">Nucleus</location>
    </subcellularLocation>
    <subcellularLocation>
        <location evidence="1">Cytoplasm</location>
    </subcellularLocation>
    <subcellularLocation>
        <location evidence="1">Chromosome</location>
    </subcellularLocation>
</comment>
<comment type="similarity">
    <text evidence="3">Belongs to the class I-like SAM-binding methyltransferase superfamily. Protein arginine N-methyltransferase family.</text>
</comment>
<name>CARM1_XENLA</name>
<reference key="1">
    <citation type="submission" date="2004-09" db="EMBL/GenBank/DDBJ databases">
        <authorList>
            <consortium name="NIH - Xenopus Gene Collection (XGC) project"/>
        </authorList>
    </citation>
    <scope>NUCLEOTIDE SEQUENCE [LARGE SCALE MRNA]</scope>
    <source>
        <tissue>Embryo</tissue>
    </source>
</reference>